<feature type="chain" id="PRO_1000211946" description="Adenosine deaminase">
    <location>
        <begin position="1"/>
        <end position="331"/>
    </location>
</feature>
<feature type="active site" description="Proton donor" evidence="1">
    <location>
        <position position="200"/>
    </location>
</feature>
<feature type="binding site" evidence="1">
    <location>
        <position position="12"/>
    </location>
    <ligand>
        <name>Zn(2+)</name>
        <dbReference type="ChEBI" id="CHEBI:29105"/>
        <note>catalytic</note>
    </ligand>
</feature>
<feature type="binding site" evidence="1">
    <location>
        <position position="14"/>
    </location>
    <ligand>
        <name>substrate</name>
    </ligand>
</feature>
<feature type="binding site" evidence="1">
    <location>
        <position position="14"/>
    </location>
    <ligand>
        <name>Zn(2+)</name>
        <dbReference type="ChEBI" id="CHEBI:29105"/>
        <note>catalytic</note>
    </ligand>
</feature>
<feature type="binding site" evidence="1">
    <location>
        <position position="16"/>
    </location>
    <ligand>
        <name>substrate</name>
    </ligand>
</feature>
<feature type="binding site" evidence="1">
    <location>
        <position position="170"/>
    </location>
    <ligand>
        <name>substrate</name>
    </ligand>
</feature>
<feature type="binding site" evidence="1">
    <location>
        <position position="197"/>
    </location>
    <ligand>
        <name>Zn(2+)</name>
        <dbReference type="ChEBI" id="CHEBI:29105"/>
        <note>catalytic</note>
    </ligand>
</feature>
<feature type="binding site" evidence="1">
    <location>
        <position position="278"/>
    </location>
    <ligand>
        <name>Zn(2+)</name>
        <dbReference type="ChEBI" id="CHEBI:29105"/>
        <note>catalytic</note>
    </ligand>
</feature>
<feature type="site" description="Important for catalytic activity" evidence="1">
    <location>
        <position position="221"/>
    </location>
</feature>
<organism>
    <name type="scientific">Clostridium botulinum (strain 657 / Type Ba4)</name>
    <dbReference type="NCBI Taxonomy" id="515621"/>
    <lineage>
        <taxon>Bacteria</taxon>
        <taxon>Bacillati</taxon>
        <taxon>Bacillota</taxon>
        <taxon>Clostridia</taxon>
        <taxon>Eubacteriales</taxon>
        <taxon>Clostridiaceae</taxon>
        <taxon>Clostridium</taxon>
    </lineage>
</organism>
<evidence type="ECO:0000255" key="1">
    <source>
        <dbReference type="HAMAP-Rule" id="MF_00540"/>
    </source>
</evidence>
<name>ADD_CLOB6</name>
<reference key="1">
    <citation type="submission" date="2008-05" db="EMBL/GenBank/DDBJ databases">
        <title>Genome sequence of Clostridium botulinum Ba4 strain 657.</title>
        <authorList>
            <person name="Shrivastava S."/>
            <person name="Brown J.L."/>
            <person name="Bruce D."/>
            <person name="Detter C."/>
            <person name="Munk C."/>
            <person name="Smith L.A."/>
            <person name="Smith T.J."/>
            <person name="Sutton G."/>
            <person name="Brettin T.S."/>
        </authorList>
    </citation>
    <scope>NUCLEOTIDE SEQUENCE [LARGE SCALE GENOMIC DNA]</scope>
    <source>
        <strain>657 / Type Ba4</strain>
    </source>
</reference>
<gene>
    <name evidence="1" type="primary">add</name>
    <name type="ordered locus">CLJ_B1035</name>
</gene>
<comment type="function">
    <text evidence="1">Catalyzes the hydrolytic deamination of adenosine and 2-deoxyadenosine.</text>
</comment>
<comment type="catalytic activity">
    <reaction evidence="1">
        <text>adenosine + H2O + H(+) = inosine + NH4(+)</text>
        <dbReference type="Rhea" id="RHEA:24408"/>
        <dbReference type="ChEBI" id="CHEBI:15377"/>
        <dbReference type="ChEBI" id="CHEBI:15378"/>
        <dbReference type="ChEBI" id="CHEBI:16335"/>
        <dbReference type="ChEBI" id="CHEBI:17596"/>
        <dbReference type="ChEBI" id="CHEBI:28938"/>
        <dbReference type="EC" id="3.5.4.4"/>
    </reaction>
    <physiologicalReaction direction="left-to-right" evidence="1">
        <dbReference type="Rhea" id="RHEA:24409"/>
    </physiologicalReaction>
</comment>
<comment type="catalytic activity">
    <reaction evidence="1">
        <text>2'-deoxyadenosine + H2O + H(+) = 2'-deoxyinosine + NH4(+)</text>
        <dbReference type="Rhea" id="RHEA:28190"/>
        <dbReference type="ChEBI" id="CHEBI:15377"/>
        <dbReference type="ChEBI" id="CHEBI:15378"/>
        <dbReference type="ChEBI" id="CHEBI:17256"/>
        <dbReference type="ChEBI" id="CHEBI:28938"/>
        <dbReference type="ChEBI" id="CHEBI:28997"/>
        <dbReference type="EC" id="3.5.4.4"/>
    </reaction>
    <physiologicalReaction direction="left-to-right" evidence="1">
        <dbReference type="Rhea" id="RHEA:28191"/>
    </physiologicalReaction>
</comment>
<comment type="cofactor">
    <cofactor evidence="1">
        <name>Zn(2+)</name>
        <dbReference type="ChEBI" id="CHEBI:29105"/>
    </cofactor>
    <text evidence="1">Binds 1 zinc ion per subunit.</text>
</comment>
<comment type="similarity">
    <text evidence="1">Belongs to the metallo-dependent hydrolases superfamily. Adenosine and AMP deaminases family. Adenosine deaminase subfamily.</text>
</comment>
<accession>C3L357</accession>
<sequence>MNFKKLPKIELHCHLDGSLRVDTILDIAKKDNIPLPSYNEKELINYVSIMDDCNSLDEYLNKFFIPNKVMQTKENLKRIAFELLEDVAADNVKYIEVRFAPLLHVEKGLNIEEIIESVLEGIKEAEKLYDIKGNLILGCMRNMDIPSAFEVVKKGAKFIGKGVVAIDLCGGEEPHFPGKYVEVLKLAKEYGYRITIHAGEAGVGENVLEAINLLNAERIGHGIYIKNCAEAYKLVKEKNIPLEVCPTSNLHTKAFESYETHPFMDFLKDDIKITINTDNMTVSNTTITKELEMLNKFCGLSIEDYKTIYLNSVEAAFTTKEAKKRLKKFVE</sequence>
<protein>
    <recommendedName>
        <fullName evidence="1">Adenosine deaminase</fullName>
        <ecNumber evidence="1">3.5.4.4</ecNumber>
    </recommendedName>
    <alternativeName>
        <fullName evidence="1">Adenosine aminohydrolase</fullName>
    </alternativeName>
</protein>
<proteinExistence type="inferred from homology"/>
<keyword id="KW-0378">Hydrolase</keyword>
<keyword id="KW-0479">Metal-binding</keyword>
<keyword id="KW-0546">Nucleotide metabolism</keyword>
<keyword id="KW-0862">Zinc</keyword>
<dbReference type="EC" id="3.5.4.4" evidence="1"/>
<dbReference type="EMBL" id="CP001083">
    <property type="protein sequence ID" value="ACQ54388.1"/>
    <property type="molecule type" value="Genomic_DNA"/>
</dbReference>
<dbReference type="RefSeq" id="WP_003360944.1">
    <property type="nucleotide sequence ID" value="NC_012658.1"/>
</dbReference>
<dbReference type="SMR" id="C3L357"/>
<dbReference type="KEGG" id="cbi:CLJ_B1035"/>
<dbReference type="HOGENOM" id="CLU_039228_0_0_9"/>
<dbReference type="Proteomes" id="UP000002333">
    <property type="component" value="Chromosome"/>
</dbReference>
<dbReference type="GO" id="GO:0005829">
    <property type="term" value="C:cytosol"/>
    <property type="evidence" value="ECO:0007669"/>
    <property type="project" value="TreeGrafter"/>
</dbReference>
<dbReference type="GO" id="GO:0046936">
    <property type="term" value="F:2'-deoxyadenosine deaminase activity"/>
    <property type="evidence" value="ECO:0007669"/>
    <property type="project" value="RHEA"/>
</dbReference>
<dbReference type="GO" id="GO:0004000">
    <property type="term" value="F:adenosine deaminase activity"/>
    <property type="evidence" value="ECO:0007669"/>
    <property type="project" value="UniProtKB-UniRule"/>
</dbReference>
<dbReference type="GO" id="GO:0008270">
    <property type="term" value="F:zinc ion binding"/>
    <property type="evidence" value="ECO:0007669"/>
    <property type="project" value="UniProtKB-UniRule"/>
</dbReference>
<dbReference type="GO" id="GO:0006154">
    <property type="term" value="P:adenosine catabolic process"/>
    <property type="evidence" value="ECO:0007669"/>
    <property type="project" value="TreeGrafter"/>
</dbReference>
<dbReference type="GO" id="GO:0043103">
    <property type="term" value="P:hypoxanthine salvage"/>
    <property type="evidence" value="ECO:0007669"/>
    <property type="project" value="TreeGrafter"/>
</dbReference>
<dbReference type="GO" id="GO:0046103">
    <property type="term" value="P:inosine biosynthetic process"/>
    <property type="evidence" value="ECO:0007669"/>
    <property type="project" value="TreeGrafter"/>
</dbReference>
<dbReference type="GO" id="GO:0009117">
    <property type="term" value="P:nucleotide metabolic process"/>
    <property type="evidence" value="ECO:0007669"/>
    <property type="project" value="UniProtKB-KW"/>
</dbReference>
<dbReference type="GO" id="GO:0009168">
    <property type="term" value="P:purine ribonucleoside monophosphate biosynthetic process"/>
    <property type="evidence" value="ECO:0007669"/>
    <property type="project" value="UniProtKB-UniRule"/>
</dbReference>
<dbReference type="CDD" id="cd01320">
    <property type="entry name" value="ADA"/>
    <property type="match status" value="1"/>
</dbReference>
<dbReference type="FunFam" id="3.20.20.140:FF:000093">
    <property type="entry name" value="Adenosine deaminase"/>
    <property type="match status" value="1"/>
</dbReference>
<dbReference type="Gene3D" id="3.20.20.140">
    <property type="entry name" value="Metal-dependent hydrolases"/>
    <property type="match status" value="1"/>
</dbReference>
<dbReference type="HAMAP" id="MF_00540">
    <property type="entry name" value="A_deaminase"/>
    <property type="match status" value="1"/>
</dbReference>
<dbReference type="InterPro" id="IPR028893">
    <property type="entry name" value="A_deaminase"/>
</dbReference>
<dbReference type="InterPro" id="IPR001365">
    <property type="entry name" value="A_deaminase_dom"/>
</dbReference>
<dbReference type="InterPro" id="IPR006330">
    <property type="entry name" value="Ado/ade_deaminase"/>
</dbReference>
<dbReference type="InterPro" id="IPR032466">
    <property type="entry name" value="Metal_Hydrolase"/>
</dbReference>
<dbReference type="NCBIfam" id="TIGR01430">
    <property type="entry name" value="aden_deam"/>
    <property type="match status" value="1"/>
</dbReference>
<dbReference type="PANTHER" id="PTHR11409">
    <property type="entry name" value="ADENOSINE DEAMINASE"/>
    <property type="match status" value="1"/>
</dbReference>
<dbReference type="PANTHER" id="PTHR11409:SF43">
    <property type="entry name" value="ADENOSINE DEAMINASE"/>
    <property type="match status" value="1"/>
</dbReference>
<dbReference type="Pfam" id="PF00962">
    <property type="entry name" value="A_deaminase"/>
    <property type="match status" value="1"/>
</dbReference>
<dbReference type="SUPFAM" id="SSF51556">
    <property type="entry name" value="Metallo-dependent hydrolases"/>
    <property type="match status" value="1"/>
</dbReference>